<organism>
    <name type="scientific">Synechococcus sp. (strain RCC307)</name>
    <dbReference type="NCBI Taxonomy" id="316278"/>
    <lineage>
        <taxon>Bacteria</taxon>
        <taxon>Bacillati</taxon>
        <taxon>Cyanobacteriota</taxon>
        <taxon>Cyanophyceae</taxon>
        <taxon>Synechococcales</taxon>
        <taxon>Synechococcaceae</taxon>
        <taxon>Synechococcus</taxon>
    </lineage>
</organism>
<evidence type="ECO:0000255" key="1">
    <source>
        <dbReference type="HAMAP-Rule" id="MF_01325"/>
    </source>
</evidence>
<evidence type="ECO:0000256" key="2">
    <source>
        <dbReference type="SAM" id="MobiDB-lite"/>
    </source>
</evidence>
<evidence type="ECO:0000305" key="3"/>
<accession>A5GVW0</accession>
<reference key="1">
    <citation type="submission" date="2006-05" db="EMBL/GenBank/DDBJ databases">
        <authorList>
            <consortium name="Genoscope"/>
        </authorList>
    </citation>
    <scope>NUCLEOTIDE SEQUENCE [LARGE SCALE GENOMIC DNA]</scope>
    <source>
        <strain>RCC307</strain>
    </source>
</reference>
<comment type="function">
    <text evidence="1">One of the primary rRNA binding proteins, it binds directly near the 3'-end of the 23S rRNA, where it nucleates assembly of the 50S subunit.</text>
</comment>
<comment type="subunit">
    <text evidence="1">Part of the 50S ribosomal subunit. Forms a cluster with proteins L14 and L19.</text>
</comment>
<comment type="similarity">
    <text evidence="1">Belongs to the universal ribosomal protein uL3 family.</text>
</comment>
<protein>
    <recommendedName>
        <fullName evidence="1">Large ribosomal subunit protein uL3</fullName>
    </recommendedName>
    <alternativeName>
        <fullName evidence="3">50S ribosomal protein L3</fullName>
    </alternativeName>
</protein>
<name>RL3_SYNR3</name>
<keyword id="KW-1185">Reference proteome</keyword>
<keyword id="KW-0687">Ribonucleoprotein</keyword>
<keyword id="KW-0689">Ribosomal protein</keyword>
<keyword id="KW-0694">RNA-binding</keyword>
<keyword id="KW-0699">rRNA-binding</keyword>
<feature type="chain" id="PRO_1000052159" description="Large ribosomal subunit protein uL3">
    <location>
        <begin position="1"/>
        <end position="215"/>
    </location>
</feature>
<feature type="region of interest" description="Disordered" evidence="2">
    <location>
        <begin position="124"/>
        <end position="164"/>
    </location>
</feature>
<sequence length="215" mass="22732">MSIGILGKKLGMSQFFDDEGRAVPVTVIEAGPCRITQVKTPTNDGYSAVQVGFGDVREKLVNQPAKGHLKKSGEDLLRHLKEYRVDSTDGVELGSSVTVDAFEPGQKVDVSGDTMGRGFSGYQKRHGFSRGPMTHGSKNHREPGSTGAGTTPGRIYPGKRMAGRYGGTKTTVKGLVVLKVDSERNLLVVKGSVPGKPGALLSIRPAVRVGAKATA</sequence>
<gene>
    <name evidence="1" type="primary">rplC</name>
    <name evidence="1" type="synonym">rpl3</name>
    <name type="ordered locus">SynRCC307_2116</name>
</gene>
<proteinExistence type="inferred from homology"/>
<dbReference type="EMBL" id="CT978603">
    <property type="protein sequence ID" value="CAK29019.1"/>
    <property type="molecule type" value="Genomic_DNA"/>
</dbReference>
<dbReference type="SMR" id="A5GVW0"/>
<dbReference type="STRING" id="316278.SynRCC307_2116"/>
<dbReference type="KEGG" id="syr:SynRCC307_2116"/>
<dbReference type="eggNOG" id="COG0087">
    <property type="taxonomic scope" value="Bacteria"/>
</dbReference>
<dbReference type="HOGENOM" id="CLU_044142_4_1_3"/>
<dbReference type="OrthoDB" id="9806135at2"/>
<dbReference type="Proteomes" id="UP000001115">
    <property type="component" value="Chromosome"/>
</dbReference>
<dbReference type="GO" id="GO:0022625">
    <property type="term" value="C:cytosolic large ribosomal subunit"/>
    <property type="evidence" value="ECO:0007669"/>
    <property type="project" value="TreeGrafter"/>
</dbReference>
<dbReference type="GO" id="GO:0019843">
    <property type="term" value="F:rRNA binding"/>
    <property type="evidence" value="ECO:0007669"/>
    <property type="project" value="UniProtKB-UniRule"/>
</dbReference>
<dbReference type="GO" id="GO:0003735">
    <property type="term" value="F:structural constituent of ribosome"/>
    <property type="evidence" value="ECO:0007669"/>
    <property type="project" value="InterPro"/>
</dbReference>
<dbReference type="GO" id="GO:0006412">
    <property type="term" value="P:translation"/>
    <property type="evidence" value="ECO:0007669"/>
    <property type="project" value="UniProtKB-UniRule"/>
</dbReference>
<dbReference type="FunFam" id="3.30.160.810:FF:000001">
    <property type="entry name" value="50S ribosomal protein L3"/>
    <property type="match status" value="1"/>
</dbReference>
<dbReference type="FunFam" id="2.40.30.10:FF:000065">
    <property type="entry name" value="50S ribosomal protein L3, chloroplastic"/>
    <property type="match status" value="1"/>
</dbReference>
<dbReference type="Gene3D" id="3.30.160.810">
    <property type="match status" value="1"/>
</dbReference>
<dbReference type="Gene3D" id="2.40.30.10">
    <property type="entry name" value="Translation factors"/>
    <property type="match status" value="1"/>
</dbReference>
<dbReference type="HAMAP" id="MF_01325_B">
    <property type="entry name" value="Ribosomal_uL3_B"/>
    <property type="match status" value="1"/>
</dbReference>
<dbReference type="InterPro" id="IPR000597">
    <property type="entry name" value="Ribosomal_uL3"/>
</dbReference>
<dbReference type="InterPro" id="IPR019927">
    <property type="entry name" value="Ribosomal_uL3_bac/org-type"/>
</dbReference>
<dbReference type="InterPro" id="IPR019926">
    <property type="entry name" value="Ribosomal_uL3_CS"/>
</dbReference>
<dbReference type="InterPro" id="IPR009000">
    <property type="entry name" value="Transl_B-barrel_sf"/>
</dbReference>
<dbReference type="NCBIfam" id="TIGR03625">
    <property type="entry name" value="L3_bact"/>
    <property type="match status" value="1"/>
</dbReference>
<dbReference type="PANTHER" id="PTHR11229">
    <property type="entry name" value="50S RIBOSOMAL PROTEIN L3"/>
    <property type="match status" value="1"/>
</dbReference>
<dbReference type="PANTHER" id="PTHR11229:SF16">
    <property type="entry name" value="LARGE RIBOSOMAL SUBUNIT PROTEIN UL3C"/>
    <property type="match status" value="1"/>
</dbReference>
<dbReference type="Pfam" id="PF00297">
    <property type="entry name" value="Ribosomal_L3"/>
    <property type="match status" value="1"/>
</dbReference>
<dbReference type="SUPFAM" id="SSF50447">
    <property type="entry name" value="Translation proteins"/>
    <property type="match status" value="1"/>
</dbReference>
<dbReference type="PROSITE" id="PS00474">
    <property type="entry name" value="RIBOSOMAL_L3"/>
    <property type="match status" value="1"/>
</dbReference>